<accession>C3KVQ1</accession>
<proteinExistence type="inferred from homology"/>
<protein>
    <recommendedName>
        <fullName evidence="1">Large ribosomal subunit protein uL3</fullName>
    </recommendedName>
    <alternativeName>
        <fullName evidence="3">50S ribosomal protein L3</fullName>
    </alternativeName>
</protein>
<evidence type="ECO:0000255" key="1">
    <source>
        <dbReference type="HAMAP-Rule" id="MF_01325"/>
    </source>
</evidence>
<evidence type="ECO:0000256" key="2">
    <source>
        <dbReference type="SAM" id="MobiDB-lite"/>
    </source>
</evidence>
<evidence type="ECO:0000305" key="3"/>
<gene>
    <name evidence="1" type="primary">rplC</name>
    <name type="ordered locus">CLJ_B3789</name>
</gene>
<reference key="1">
    <citation type="submission" date="2008-05" db="EMBL/GenBank/DDBJ databases">
        <title>Genome sequence of Clostridium botulinum Ba4 strain 657.</title>
        <authorList>
            <person name="Shrivastava S."/>
            <person name="Brown J.L."/>
            <person name="Bruce D."/>
            <person name="Detter C."/>
            <person name="Munk C."/>
            <person name="Smith L.A."/>
            <person name="Smith T.J."/>
            <person name="Sutton G."/>
            <person name="Brettin T.S."/>
        </authorList>
    </citation>
    <scope>NUCLEOTIDE SEQUENCE [LARGE SCALE GENOMIC DNA]</scope>
    <source>
        <strain>657 / Type Ba4</strain>
    </source>
</reference>
<dbReference type="EMBL" id="CP001083">
    <property type="protein sequence ID" value="ACQ53366.1"/>
    <property type="molecule type" value="Genomic_DNA"/>
</dbReference>
<dbReference type="RefSeq" id="WP_003360192.1">
    <property type="nucleotide sequence ID" value="NC_012658.1"/>
</dbReference>
<dbReference type="SMR" id="C3KVQ1"/>
<dbReference type="KEGG" id="cbi:CLJ_B3789"/>
<dbReference type="HOGENOM" id="CLU_044142_4_1_9"/>
<dbReference type="Proteomes" id="UP000002333">
    <property type="component" value="Chromosome"/>
</dbReference>
<dbReference type="GO" id="GO:0022625">
    <property type="term" value="C:cytosolic large ribosomal subunit"/>
    <property type="evidence" value="ECO:0007669"/>
    <property type="project" value="TreeGrafter"/>
</dbReference>
<dbReference type="GO" id="GO:0019843">
    <property type="term" value="F:rRNA binding"/>
    <property type="evidence" value="ECO:0007669"/>
    <property type="project" value="UniProtKB-UniRule"/>
</dbReference>
<dbReference type="GO" id="GO:0003735">
    <property type="term" value="F:structural constituent of ribosome"/>
    <property type="evidence" value="ECO:0007669"/>
    <property type="project" value="InterPro"/>
</dbReference>
<dbReference type="GO" id="GO:0006412">
    <property type="term" value="P:translation"/>
    <property type="evidence" value="ECO:0007669"/>
    <property type="project" value="UniProtKB-UniRule"/>
</dbReference>
<dbReference type="FunFam" id="2.40.30.10:FF:000004">
    <property type="entry name" value="50S ribosomal protein L3"/>
    <property type="match status" value="1"/>
</dbReference>
<dbReference type="FunFam" id="3.30.160.810:FF:000001">
    <property type="entry name" value="50S ribosomal protein L3"/>
    <property type="match status" value="1"/>
</dbReference>
<dbReference type="Gene3D" id="3.30.160.810">
    <property type="match status" value="1"/>
</dbReference>
<dbReference type="Gene3D" id="2.40.30.10">
    <property type="entry name" value="Translation factors"/>
    <property type="match status" value="1"/>
</dbReference>
<dbReference type="HAMAP" id="MF_01325_B">
    <property type="entry name" value="Ribosomal_uL3_B"/>
    <property type="match status" value="1"/>
</dbReference>
<dbReference type="InterPro" id="IPR000597">
    <property type="entry name" value="Ribosomal_uL3"/>
</dbReference>
<dbReference type="InterPro" id="IPR019927">
    <property type="entry name" value="Ribosomal_uL3_bac/org-type"/>
</dbReference>
<dbReference type="InterPro" id="IPR019926">
    <property type="entry name" value="Ribosomal_uL3_CS"/>
</dbReference>
<dbReference type="InterPro" id="IPR009000">
    <property type="entry name" value="Transl_B-barrel_sf"/>
</dbReference>
<dbReference type="NCBIfam" id="TIGR03625">
    <property type="entry name" value="L3_bact"/>
    <property type="match status" value="1"/>
</dbReference>
<dbReference type="PANTHER" id="PTHR11229">
    <property type="entry name" value="50S RIBOSOMAL PROTEIN L3"/>
    <property type="match status" value="1"/>
</dbReference>
<dbReference type="PANTHER" id="PTHR11229:SF16">
    <property type="entry name" value="LARGE RIBOSOMAL SUBUNIT PROTEIN UL3C"/>
    <property type="match status" value="1"/>
</dbReference>
<dbReference type="Pfam" id="PF00297">
    <property type="entry name" value="Ribosomal_L3"/>
    <property type="match status" value="1"/>
</dbReference>
<dbReference type="SUPFAM" id="SSF50447">
    <property type="entry name" value="Translation proteins"/>
    <property type="match status" value="1"/>
</dbReference>
<dbReference type="PROSITE" id="PS00474">
    <property type="entry name" value="RIBOSOMAL_L3"/>
    <property type="match status" value="1"/>
</dbReference>
<keyword id="KW-0687">Ribonucleoprotein</keyword>
<keyword id="KW-0689">Ribosomal protein</keyword>
<keyword id="KW-0694">RNA-binding</keyword>
<keyword id="KW-0699">rRNA-binding</keyword>
<organism>
    <name type="scientific">Clostridium botulinum (strain 657 / Type Ba4)</name>
    <dbReference type="NCBI Taxonomy" id="515621"/>
    <lineage>
        <taxon>Bacteria</taxon>
        <taxon>Bacillati</taxon>
        <taxon>Bacillota</taxon>
        <taxon>Clostridia</taxon>
        <taxon>Eubacteriales</taxon>
        <taxon>Clostridiaceae</taxon>
        <taxon>Clostridium</taxon>
    </lineage>
</organism>
<name>RL3_CLOB6</name>
<feature type="chain" id="PRO_1000214501" description="Large ribosomal subunit protein uL3">
    <location>
        <begin position="1"/>
        <end position="209"/>
    </location>
</feature>
<feature type="region of interest" description="Disordered" evidence="2">
    <location>
        <begin position="128"/>
        <end position="163"/>
    </location>
</feature>
<sequence length="209" mass="22860">MKKAILGKKLGMTQIFNENGKVIPVTVIEAGPCTVIQKKTVEKDGYEAIQVAFGDIREKLRNKPVKGHFAKAGVSVKRHIKEFKLEDSNSLEIGQEIKADVFEAGERVDISGVSKGKGFQGTIRRWNAHRGPMTHGSKFHRAVGSMGASSDPSRTFKNKRMPGHMGNVNTTVLNLEVVRIIPEKNLILIKGGVPGPNKGLVQIRNTVKA</sequence>
<comment type="function">
    <text evidence="1">One of the primary rRNA binding proteins, it binds directly near the 3'-end of the 23S rRNA, where it nucleates assembly of the 50S subunit.</text>
</comment>
<comment type="subunit">
    <text evidence="1">Part of the 50S ribosomal subunit. Forms a cluster with proteins L14 and L19.</text>
</comment>
<comment type="similarity">
    <text evidence="1">Belongs to the universal ribosomal protein uL3 family.</text>
</comment>